<proteinExistence type="inferred from homology"/>
<reference key="1">
    <citation type="journal article" date="2010" name="PLoS Genet.">
        <title>Genome sequence of the plant growth promoting endophytic bacterium Enterobacter sp. 638.</title>
        <authorList>
            <person name="Taghavi S."/>
            <person name="van der Lelie D."/>
            <person name="Hoffman A."/>
            <person name="Zhang Y.B."/>
            <person name="Walla M.D."/>
            <person name="Vangronsveld J."/>
            <person name="Newman L."/>
            <person name="Monchy S."/>
        </authorList>
    </citation>
    <scope>NUCLEOTIDE SEQUENCE [LARGE SCALE GENOMIC DNA]</scope>
    <source>
        <strain>638</strain>
    </source>
</reference>
<sequence>MDHRLLEIIACPVCNGKLYYSQDKQELICKLDNLAFPLRDGIPVLLETEARSLAAEESRP</sequence>
<accession>A4W8T6</accession>
<comment type="similarity">
    <text evidence="1">Belongs to the UPF0434 family.</text>
</comment>
<dbReference type="EMBL" id="CP000653">
    <property type="protein sequence ID" value="ABP60116.1"/>
    <property type="molecule type" value="Genomic_DNA"/>
</dbReference>
<dbReference type="RefSeq" id="WP_012016833.1">
    <property type="nucleotide sequence ID" value="NC_009436.1"/>
</dbReference>
<dbReference type="SMR" id="A4W8T6"/>
<dbReference type="STRING" id="399742.Ent638_1436"/>
<dbReference type="KEGG" id="ent:Ent638_1436"/>
<dbReference type="eggNOG" id="COG2835">
    <property type="taxonomic scope" value="Bacteria"/>
</dbReference>
<dbReference type="HOGENOM" id="CLU_155659_3_1_6"/>
<dbReference type="OrthoDB" id="9812205at2"/>
<dbReference type="Proteomes" id="UP000000230">
    <property type="component" value="Chromosome"/>
</dbReference>
<dbReference type="GO" id="GO:0005829">
    <property type="term" value="C:cytosol"/>
    <property type="evidence" value="ECO:0007669"/>
    <property type="project" value="TreeGrafter"/>
</dbReference>
<dbReference type="FunFam" id="2.20.25.10:FF:000002">
    <property type="entry name" value="UPF0434 protein YcaR"/>
    <property type="match status" value="1"/>
</dbReference>
<dbReference type="Gene3D" id="2.20.25.10">
    <property type="match status" value="1"/>
</dbReference>
<dbReference type="HAMAP" id="MF_01187">
    <property type="entry name" value="UPF0434"/>
    <property type="match status" value="1"/>
</dbReference>
<dbReference type="InterPro" id="IPR005651">
    <property type="entry name" value="Trm112-like"/>
</dbReference>
<dbReference type="NCBIfam" id="NF008806">
    <property type="entry name" value="PRK11827.1"/>
    <property type="match status" value="1"/>
</dbReference>
<dbReference type="PANTHER" id="PTHR33505:SF4">
    <property type="entry name" value="PROTEIN PREY, MITOCHONDRIAL"/>
    <property type="match status" value="1"/>
</dbReference>
<dbReference type="PANTHER" id="PTHR33505">
    <property type="entry name" value="ZGC:162634"/>
    <property type="match status" value="1"/>
</dbReference>
<dbReference type="Pfam" id="PF03966">
    <property type="entry name" value="Trm112p"/>
    <property type="match status" value="1"/>
</dbReference>
<dbReference type="SUPFAM" id="SSF158997">
    <property type="entry name" value="Trm112p-like"/>
    <property type="match status" value="1"/>
</dbReference>
<name>Y1436_ENT38</name>
<evidence type="ECO:0000255" key="1">
    <source>
        <dbReference type="HAMAP-Rule" id="MF_01187"/>
    </source>
</evidence>
<gene>
    <name type="ordered locus">Ent638_1436</name>
</gene>
<organism>
    <name type="scientific">Enterobacter sp. (strain 638)</name>
    <dbReference type="NCBI Taxonomy" id="399742"/>
    <lineage>
        <taxon>Bacteria</taxon>
        <taxon>Pseudomonadati</taxon>
        <taxon>Pseudomonadota</taxon>
        <taxon>Gammaproteobacteria</taxon>
        <taxon>Enterobacterales</taxon>
        <taxon>Enterobacteriaceae</taxon>
        <taxon>Enterobacter</taxon>
    </lineage>
</organism>
<protein>
    <recommendedName>
        <fullName evidence="1">UPF0434 protein Ent638_1436</fullName>
    </recommendedName>
</protein>
<feature type="chain" id="PRO_1000065840" description="UPF0434 protein Ent638_1436">
    <location>
        <begin position="1"/>
        <end position="60"/>
    </location>
</feature>